<name>PSBS1_ORYSI</name>
<evidence type="ECO:0000250" key="1">
    <source>
        <dbReference type="UniProtKB" id="Q0J8R9"/>
    </source>
</evidence>
<evidence type="ECO:0000250" key="2">
    <source>
        <dbReference type="UniProtKB" id="Q943K1"/>
    </source>
</evidence>
<evidence type="ECO:0000250" key="3">
    <source>
        <dbReference type="UniProtKB" id="Q9XF91"/>
    </source>
</evidence>
<evidence type="ECO:0000255" key="4"/>
<evidence type="ECO:0000269" key="5">
    <source>
    </source>
</evidence>
<evidence type="ECO:0000269" key="6">
    <source>
    </source>
</evidence>
<evidence type="ECO:0000303" key="7">
    <source>
    </source>
</evidence>
<evidence type="ECO:0000305" key="8"/>
<evidence type="ECO:0000312" key="9">
    <source>
        <dbReference type="EMBL" id="EAY76635.1"/>
    </source>
</evidence>
<keyword id="KW-0150">Chloroplast</keyword>
<keyword id="KW-0472">Membrane</keyword>
<keyword id="KW-0602">Photosynthesis</keyword>
<keyword id="KW-0604">Photosystem II</keyword>
<keyword id="KW-0934">Plastid</keyword>
<keyword id="KW-1185">Reference proteome</keyword>
<keyword id="KW-0677">Repeat</keyword>
<keyword id="KW-0793">Thylakoid</keyword>
<keyword id="KW-0809">Transit peptide</keyword>
<keyword id="KW-0812">Transmembrane</keyword>
<keyword id="KW-1133">Transmembrane helix</keyword>
<organism>
    <name type="scientific">Oryza sativa subsp. indica</name>
    <name type="common">Rice</name>
    <dbReference type="NCBI Taxonomy" id="39946"/>
    <lineage>
        <taxon>Eukaryota</taxon>
        <taxon>Viridiplantae</taxon>
        <taxon>Streptophyta</taxon>
        <taxon>Embryophyta</taxon>
        <taxon>Tracheophyta</taxon>
        <taxon>Spermatophyta</taxon>
        <taxon>Magnoliopsida</taxon>
        <taxon>Liliopsida</taxon>
        <taxon>Poales</taxon>
        <taxon>Poaceae</taxon>
        <taxon>BOP clade</taxon>
        <taxon>Oryzoideae</taxon>
        <taxon>Oryzeae</taxon>
        <taxon>Oryzinae</taxon>
        <taxon>Oryza</taxon>
        <taxon>Oryza sativa</taxon>
    </lineage>
</organism>
<comment type="function">
    <text evidence="2 5">Involved in high light-mediated energy-dependent nonphotochemical quenching (NPQ, qE) and thermal dissipation (TD) thus regulating energy conversion in photosystem II and protecting from photoinhibition (PubMed:21804028). Also seems to regulate quantum yield of electron transport in fluctuating light conditions (By similarity).</text>
</comment>
<comment type="subcellular location">
    <subcellularLocation>
        <location evidence="3">Plastid</location>
        <location evidence="3">Chloroplast thylakoid membrane</location>
        <topology evidence="4">Multi-pass membrane protein</topology>
    </subcellularLocation>
</comment>
<comment type="tissue specificity">
    <text evidence="5">Expressed at low levels in leaves (at protein level).</text>
</comment>
<comment type="induction">
    <text evidence="6">Not induced by high light.</text>
</comment>
<comment type="miscellaneous">
    <text evidence="6">A Mutator-like-element (MULE) is present in the promoter of japonica type cultivars but not in indica type cultivars; this leads to an accumulation in response to high light.</text>
</comment>
<comment type="similarity">
    <text evidence="8">Belongs to the ELIP/psbS family.</text>
</comment>
<gene>
    <name evidence="7" type="primary">PSBS1</name>
    <name evidence="7" type="synonym">qNPQ1-2</name>
    <name evidence="9" type="ORF">OsI_04589</name>
</gene>
<proteinExistence type="evidence at protein level"/>
<reference key="1">
    <citation type="journal article" date="2005" name="PLoS Biol.">
        <title>The genomes of Oryza sativa: a history of duplications.</title>
        <authorList>
            <person name="Yu J."/>
            <person name="Wang J."/>
            <person name="Lin W."/>
            <person name="Li S."/>
            <person name="Li H."/>
            <person name="Zhou J."/>
            <person name="Ni P."/>
            <person name="Dong W."/>
            <person name="Hu S."/>
            <person name="Zeng C."/>
            <person name="Zhang J."/>
            <person name="Zhang Y."/>
            <person name="Li R."/>
            <person name="Xu Z."/>
            <person name="Li S."/>
            <person name="Li X."/>
            <person name="Zheng H."/>
            <person name="Cong L."/>
            <person name="Lin L."/>
            <person name="Yin J."/>
            <person name="Geng J."/>
            <person name="Li G."/>
            <person name="Shi J."/>
            <person name="Liu J."/>
            <person name="Lv H."/>
            <person name="Li J."/>
            <person name="Wang J."/>
            <person name="Deng Y."/>
            <person name="Ran L."/>
            <person name="Shi X."/>
            <person name="Wang X."/>
            <person name="Wu Q."/>
            <person name="Li C."/>
            <person name="Ren X."/>
            <person name="Wang J."/>
            <person name="Wang X."/>
            <person name="Li D."/>
            <person name="Liu D."/>
            <person name="Zhang X."/>
            <person name="Ji Z."/>
            <person name="Zhao W."/>
            <person name="Sun Y."/>
            <person name="Zhang Z."/>
            <person name="Bao J."/>
            <person name="Han Y."/>
            <person name="Dong L."/>
            <person name="Ji J."/>
            <person name="Chen P."/>
            <person name="Wu S."/>
            <person name="Liu J."/>
            <person name="Xiao Y."/>
            <person name="Bu D."/>
            <person name="Tan J."/>
            <person name="Yang L."/>
            <person name="Ye C."/>
            <person name="Zhang J."/>
            <person name="Xu J."/>
            <person name="Zhou Y."/>
            <person name="Yu Y."/>
            <person name="Zhang B."/>
            <person name="Zhuang S."/>
            <person name="Wei H."/>
            <person name="Liu B."/>
            <person name="Lei M."/>
            <person name="Yu H."/>
            <person name="Li Y."/>
            <person name="Xu H."/>
            <person name="Wei S."/>
            <person name="He X."/>
            <person name="Fang L."/>
            <person name="Zhang Z."/>
            <person name="Zhang Y."/>
            <person name="Huang X."/>
            <person name="Su Z."/>
            <person name="Tong W."/>
            <person name="Li J."/>
            <person name="Tong Z."/>
            <person name="Li S."/>
            <person name="Ye J."/>
            <person name="Wang L."/>
            <person name="Fang L."/>
            <person name="Lei T."/>
            <person name="Chen C.-S."/>
            <person name="Chen H.-C."/>
            <person name="Xu Z."/>
            <person name="Li H."/>
            <person name="Huang H."/>
            <person name="Zhang F."/>
            <person name="Xu H."/>
            <person name="Li N."/>
            <person name="Zhao C."/>
            <person name="Li S."/>
            <person name="Dong L."/>
            <person name="Huang Y."/>
            <person name="Li L."/>
            <person name="Xi Y."/>
            <person name="Qi Q."/>
            <person name="Li W."/>
            <person name="Zhang B."/>
            <person name="Hu W."/>
            <person name="Zhang Y."/>
            <person name="Tian X."/>
            <person name="Jiao Y."/>
            <person name="Liang X."/>
            <person name="Jin J."/>
            <person name="Gao L."/>
            <person name="Zheng W."/>
            <person name="Hao B."/>
            <person name="Liu S.-M."/>
            <person name="Wang W."/>
            <person name="Yuan L."/>
            <person name="Cao M."/>
            <person name="McDermott J."/>
            <person name="Samudrala R."/>
            <person name="Wang J."/>
            <person name="Wong G.K.-S."/>
            <person name="Yang H."/>
        </authorList>
    </citation>
    <scope>NUCLEOTIDE SEQUENCE [LARGE SCALE GENOMIC DNA]</scope>
    <source>
        <strain>cv. 93-11</strain>
    </source>
</reference>
<reference key="2">
    <citation type="journal article" date="2010" name="Plant Signal. Behav.">
        <title>Genome-wide analysis of the family of light-harvesting chlorophyll a/b-binding proteins in Arabidopsis and rice.</title>
        <authorList>
            <person name="Umate P."/>
        </authorList>
    </citation>
    <scope>REVIEW</scope>
</reference>
<reference key="3">
    <citation type="journal article" date="2011" name="Proc. Natl. Acad. Sci. U.S.A.">
        <title>Molecular distinction in genetic regulation of nonphotochemical quenching in rice.</title>
        <authorList>
            <person name="Kasajima I."/>
            <person name="Ebana K."/>
            <person name="Yamamoto T."/>
            <person name="Takahara K."/>
            <person name="Yano M."/>
            <person name="Kawai-Yamada M."/>
            <person name="Uchimiya H."/>
        </authorList>
    </citation>
    <scope>FUNCTION</scope>
    <scope>TISSUE SPECIFICITY</scope>
    <scope>GENE FAMILY</scope>
    <scope>NOMENCLATURE</scope>
    <source>
        <strain>cv. Habataki</strain>
    </source>
</reference>
<reference key="4">
    <citation type="journal article" date="2014" name="Plant Physiol. Biochem.">
        <title>Light energy allocation at PSII under field light conditions: how much energy is lost in NPQ-associated dissipation?</title>
        <authorList>
            <person name="Endo T."/>
            <person name="Uebayashi N."/>
            <person name="Ishida S."/>
            <person name="Ikeuchi M."/>
            <person name="Sato F."/>
        </authorList>
    </citation>
    <scope>REVIEW</scope>
</reference>
<reference key="5">
    <citation type="journal article" date="2014" name="PLoS ONE">
        <title>Does the upstream region possessing MULE-like sequence in rice upregulate PsbS1 gene expression?</title>
        <authorList>
            <person name="Nuruzzaman M."/>
            <person name="Kanno T."/>
            <person name="Amada R."/>
            <person name="Habu Y."/>
            <person name="Kasajima I."/>
            <person name="Ishikawa T."/>
            <person name="Kawai-Yamada M."/>
            <person name="Uchimiya H."/>
        </authorList>
    </citation>
    <scope>MISCELLANEOUS</scope>
    <source>
        <strain>cv. Habataki</strain>
    </source>
</reference>
<feature type="transit peptide" description="Chloroplast" evidence="4">
    <location>
        <begin position="1"/>
        <end position="60"/>
    </location>
</feature>
<feature type="chain" id="PRO_0000447493" description="Photosystem II 22 kDa protein 1, chloroplastic">
    <location>
        <begin position="61"/>
        <end position="268"/>
    </location>
</feature>
<feature type="transmembrane region" description="Helical" evidence="4">
    <location>
        <begin position="99"/>
        <end position="119"/>
    </location>
</feature>
<feature type="transmembrane region" description="Helical" evidence="4">
    <location>
        <begin position="133"/>
        <end position="153"/>
    </location>
</feature>
<feature type="transmembrane region" description="Helical" evidence="4">
    <location>
        <begin position="199"/>
        <end position="219"/>
    </location>
</feature>
<feature type="transmembrane region" description="Helical" evidence="4">
    <location>
        <begin position="234"/>
        <end position="254"/>
    </location>
</feature>
<feature type="repeat" description="1" evidence="1">
    <location>
        <begin position="54"/>
        <end position="161"/>
    </location>
</feature>
<feature type="repeat" description="2" evidence="1">
    <location>
        <begin position="164"/>
        <end position="268"/>
    </location>
</feature>
<dbReference type="EMBL" id="CM000126">
    <property type="protein sequence ID" value="EAY76635.1"/>
    <property type="molecule type" value="Genomic_DNA"/>
</dbReference>
<dbReference type="SMR" id="A2WXD9"/>
<dbReference type="STRING" id="39946.A2WXD9"/>
<dbReference type="EnsemblPlants" id="BGIOSGA004881-TA">
    <property type="protein sequence ID" value="BGIOSGA004881-PA"/>
    <property type="gene ID" value="BGIOSGA004881"/>
</dbReference>
<dbReference type="EnsemblPlants" id="OsGoSa_01g0040950.02">
    <property type="protein sequence ID" value="OsGoSa_01g0040950.02"/>
    <property type="gene ID" value="OsGoSa_01g0040950"/>
</dbReference>
<dbReference type="EnsemblPlants" id="OsIR64_01g0040390.02">
    <property type="protein sequence ID" value="OsIR64_01g0040390.02"/>
    <property type="gene ID" value="OsIR64_01g0040390"/>
</dbReference>
<dbReference type="EnsemblPlants" id="OsKYG_01g0040700.01">
    <property type="protein sequence ID" value="OsKYG_01g0040700.01"/>
    <property type="gene ID" value="OsKYG_01g0040700"/>
</dbReference>
<dbReference type="EnsemblPlants" id="OsLaMu_01g0040760.02">
    <property type="protein sequence ID" value="OsLaMu_01g0040760.02"/>
    <property type="gene ID" value="OsLaMu_01g0040760"/>
</dbReference>
<dbReference type="EnsemblPlants" id="OsLima_01g0040750.02">
    <property type="protein sequence ID" value="OsLima_01g0040750.02"/>
    <property type="gene ID" value="OsLima_01g0040750"/>
</dbReference>
<dbReference type="EnsemblPlants" id="OsMH63_01G041610_01">
    <property type="protein sequence ID" value="OsMH63_01G041610_01"/>
    <property type="gene ID" value="OsMH63_01G041610"/>
</dbReference>
<dbReference type="EnsemblPlants" id="OsPr106_01g0040720.02">
    <property type="protein sequence ID" value="OsPr106_01g0040720.02"/>
    <property type="gene ID" value="OsPr106_01g0040720"/>
</dbReference>
<dbReference type="EnsemblPlants" id="OsZS97_01G040890_03">
    <property type="protein sequence ID" value="OsZS97_01G040890_03"/>
    <property type="gene ID" value="OsZS97_01G040890"/>
</dbReference>
<dbReference type="Gramene" id="BGIOSGA004881-TA">
    <property type="protein sequence ID" value="BGIOSGA004881-PA"/>
    <property type="gene ID" value="BGIOSGA004881"/>
</dbReference>
<dbReference type="Gramene" id="OsGoSa_01g0040950.02">
    <property type="protein sequence ID" value="OsGoSa_01g0040950.02"/>
    <property type="gene ID" value="OsGoSa_01g0040950"/>
</dbReference>
<dbReference type="Gramene" id="OsIR64_01g0040390.02">
    <property type="protein sequence ID" value="OsIR64_01g0040390.02"/>
    <property type="gene ID" value="OsIR64_01g0040390"/>
</dbReference>
<dbReference type="Gramene" id="OsKYG_01g0040700.01">
    <property type="protein sequence ID" value="OsKYG_01g0040700.01"/>
    <property type="gene ID" value="OsKYG_01g0040700"/>
</dbReference>
<dbReference type="Gramene" id="OsLaMu_01g0040760.02">
    <property type="protein sequence ID" value="OsLaMu_01g0040760.02"/>
    <property type="gene ID" value="OsLaMu_01g0040760"/>
</dbReference>
<dbReference type="Gramene" id="OsLima_01g0040750.02">
    <property type="protein sequence ID" value="OsLima_01g0040750.02"/>
    <property type="gene ID" value="OsLima_01g0040750"/>
</dbReference>
<dbReference type="Gramene" id="OsMH63_01G041610_01">
    <property type="protein sequence ID" value="OsMH63_01G041610_01"/>
    <property type="gene ID" value="OsMH63_01G041610"/>
</dbReference>
<dbReference type="Gramene" id="OsPr106_01g0040720.02">
    <property type="protein sequence ID" value="OsPr106_01g0040720.02"/>
    <property type="gene ID" value="OsPr106_01g0040720"/>
</dbReference>
<dbReference type="Gramene" id="OsZS97_01G040890_03">
    <property type="protein sequence ID" value="OsZS97_01G040890_03"/>
    <property type="gene ID" value="OsZS97_01G040890"/>
</dbReference>
<dbReference type="HOGENOM" id="CLU_090803_0_0_1"/>
<dbReference type="OMA" id="PLAQFGY"/>
<dbReference type="OrthoDB" id="48883at2759"/>
<dbReference type="Proteomes" id="UP000007015">
    <property type="component" value="Chromosome 1"/>
</dbReference>
<dbReference type="GO" id="GO:0009535">
    <property type="term" value="C:chloroplast thylakoid membrane"/>
    <property type="evidence" value="ECO:0007669"/>
    <property type="project" value="UniProtKB-SubCell"/>
</dbReference>
<dbReference type="GO" id="GO:0009523">
    <property type="term" value="C:photosystem II"/>
    <property type="evidence" value="ECO:0007669"/>
    <property type="project" value="UniProtKB-KW"/>
</dbReference>
<dbReference type="GO" id="GO:0010196">
    <property type="term" value="P:nonphotochemical quenching"/>
    <property type="evidence" value="ECO:0000315"/>
    <property type="project" value="UniProtKB"/>
</dbReference>
<dbReference type="GO" id="GO:0015979">
    <property type="term" value="P:photosynthesis"/>
    <property type="evidence" value="ECO:0007669"/>
    <property type="project" value="UniProtKB-KW"/>
</dbReference>
<dbReference type="GO" id="GO:0009644">
    <property type="term" value="P:response to high light intensity"/>
    <property type="evidence" value="ECO:0007669"/>
    <property type="project" value="EnsemblPlants"/>
</dbReference>
<dbReference type="FunFam" id="1.10.3460.10:FF:000008">
    <property type="entry name" value="Photosystem II 22 kDa protein, chloroplastic"/>
    <property type="match status" value="2"/>
</dbReference>
<dbReference type="Gene3D" id="1.10.3460.10">
    <property type="entry name" value="Chlorophyll a/b binding protein domain"/>
    <property type="match status" value="2"/>
</dbReference>
<dbReference type="InterPro" id="IPR022796">
    <property type="entry name" value="Chloroa_b-bind"/>
</dbReference>
<dbReference type="PANTHER" id="PTHR14154">
    <property type="entry name" value="UPF0041 BRAIN PROTEIN 44-RELATED"/>
    <property type="match status" value="1"/>
</dbReference>
<dbReference type="Pfam" id="PF00504">
    <property type="entry name" value="Chloroa_b-bind"/>
    <property type="match status" value="1"/>
</dbReference>
<dbReference type="SUPFAM" id="SSF103511">
    <property type="entry name" value="Chlorophyll a-b binding protein"/>
    <property type="match status" value="1"/>
</dbReference>
<protein>
    <recommendedName>
        <fullName evidence="8">Photosystem II 22 kDa protein 1, chloroplastic</fullName>
        <shortName evidence="8">22 kDa protein of photosystem II 1</shortName>
    </recommendedName>
    <alternativeName>
        <fullName evidence="7">Photosystem II subunit 1</fullName>
        <shortName evidence="7">OsPsbS1</shortName>
    </alternativeName>
</protein>
<sequence>MAQSMLVSGANGTVAAASTSRLQPVRPTPFSRLVLSQPSSSLGRAVSVKTVALFGRSKTKAAPARKAEPKPKFKTEDGIFGTSGGIGFTKENELFVGRVAMLGFAASILGEAITGKGILAQLNLETGIPIYEAEPLLLFFILFTLLGAIGALGDRGSFVDDQPVTGLDKAVIAPGKGFRSALGLSEGGPLFGFTKANELFVGRLAQLGIAFSIIGEIITGKGALAQLNIETGVPINEIEPLVLFNVVFFFIAAINPGTGKFVSDDDEE</sequence>
<accession>A2WXD9</accession>